<reference key="1">
    <citation type="submission" date="2007-12" db="EMBL/GenBank/DDBJ databases">
        <title>Complete sequence of Methylobacterium extorquens PA1.</title>
        <authorList>
            <consortium name="US DOE Joint Genome Institute"/>
            <person name="Copeland A."/>
            <person name="Lucas S."/>
            <person name="Lapidus A."/>
            <person name="Barry K."/>
            <person name="Glavina del Rio T."/>
            <person name="Dalin E."/>
            <person name="Tice H."/>
            <person name="Pitluck S."/>
            <person name="Saunders E."/>
            <person name="Brettin T."/>
            <person name="Bruce D."/>
            <person name="Detter J.C."/>
            <person name="Han C."/>
            <person name="Schmutz J."/>
            <person name="Larimer F."/>
            <person name="Land M."/>
            <person name="Hauser L."/>
            <person name="Kyrpides N."/>
            <person name="Kim E."/>
            <person name="Marx C."/>
            <person name="Richardson P."/>
        </authorList>
    </citation>
    <scope>NUCLEOTIDE SEQUENCE [LARGE SCALE GENOMIC DNA]</scope>
    <source>
        <strain>PA1</strain>
    </source>
</reference>
<dbReference type="EC" id="6.2.1.1" evidence="1"/>
<dbReference type="EMBL" id="CP000908">
    <property type="protein sequence ID" value="ABY30956.1"/>
    <property type="molecule type" value="Genomic_DNA"/>
</dbReference>
<dbReference type="RefSeq" id="WP_012253968.1">
    <property type="nucleotide sequence ID" value="NC_010172.1"/>
</dbReference>
<dbReference type="SMR" id="A9W5V0"/>
<dbReference type="KEGG" id="mex:Mext_2562"/>
<dbReference type="eggNOG" id="COG0365">
    <property type="taxonomic scope" value="Bacteria"/>
</dbReference>
<dbReference type="HOGENOM" id="CLU_000022_3_6_5"/>
<dbReference type="BioCyc" id="MEXT419610:MEXT_RS12915-MONOMER"/>
<dbReference type="GO" id="GO:0005829">
    <property type="term" value="C:cytosol"/>
    <property type="evidence" value="ECO:0007669"/>
    <property type="project" value="TreeGrafter"/>
</dbReference>
<dbReference type="GO" id="GO:0003987">
    <property type="term" value="F:acetate-CoA ligase activity"/>
    <property type="evidence" value="ECO:0007669"/>
    <property type="project" value="UniProtKB-UniRule"/>
</dbReference>
<dbReference type="GO" id="GO:0016208">
    <property type="term" value="F:AMP binding"/>
    <property type="evidence" value="ECO:0007669"/>
    <property type="project" value="InterPro"/>
</dbReference>
<dbReference type="GO" id="GO:0005524">
    <property type="term" value="F:ATP binding"/>
    <property type="evidence" value="ECO:0007669"/>
    <property type="project" value="UniProtKB-KW"/>
</dbReference>
<dbReference type="GO" id="GO:0046872">
    <property type="term" value="F:metal ion binding"/>
    <property type="evidence" value="ECO:0007669"/>
    <property type="project" value="UniProtKB-KW"/>
</dbReference>
<dbReference type="GO" id="GO:0019427">
    <property type="term" value="P:acetyl-CoA biosynthetic process from acetate"/>
    <property type="evidence" value="ECO:0007669"/>
    <property type="project" value="InterPro"/>
</dbReference>
<dbReference type="CDD" id="cd05966">
    <property type="entry name" value="ACS"/>
    <property type="match status" value="1"/>
</dbReference>
<dbReference type="FunFam" id="3.30.300.30:FF:000004">
    <property type="entry name" value="Acetyl-coenzyme A synthetase"/>
    <property type="match status" value="1"/>
</dbReference>
<dbReference type="FunFam" id="3.40.50.12780:FF:000001">
    <property type="entry name" value="Acetyl-coenzyme A synthetase"/>
    <property type="match status" value="1"/>
</dbReference>
<dbReference type="Gene3D" id="3.30.300.30">
    <property type="match status" value="1"/>
</dbReference>
<dbReference type="Gene3D" id="3.40.50.12780">
    <property type="entry name" value="N-terminal domain of ligase-like"/>
    <property type="match status" value="1"/>
</dbReference>
<dbReference type="HAMAP" id="MF_01123">
    <property type="entry name" value="Ac_CoA_synth"/>
    <property type="match status" value="1"/>
</dbReference>
<dbReference type="InterPro" id="IPR011904">
    <property type="entry name" value="Ac_CoA_lig"/>
</dbReference>
<dbReference type="InterPro" id="IPR032387">
    <property type="entry name" value="ACAS_N"/>
</dbReference>
<dbReference type="InterPro" id="IPR025110">
    <property type="entry name" value="AMP-bd_C"/>
</dbReference>
<dbReference type="InterPro" id="IPR045851">
    <property type="entry name" value="AMP-bd_C_sf"/>
</dbReference>
<dbReference type="InterPro" id="IPR020845">
    <property type="entry name" value="AMP-binding_CS"/>
</dbReference>
<dbReference type="InterPro" id="IPR000873">
    <property type="entry name" value="AMP-dep_synth/lig_dom"/>
</dbReference>
<dbReference type="InterPro" id="IPR042099">
    <property type="entry name" value="ANL_N_sf"/>
</dbReference>
<dbReference type="NCBIfam" id="TIGR02188">
    <property type="entry name" value="Ac_CoA_lig_AcsA"/>
    <property type="match status" value="1"/>
</dbReference>
<dbReference type="NCBIfam" id="NF001208">
    <property type="entry name" value="PRK00174.1"/>
    <property type="match status" value="1"/>
</dbReference>
<dbReference type="PANTHER" id="PTHR24095">
    <property type="entry name" value="ACETYL-COENZYME A SYNTHETASE"/>
    <property type="match status" value="1"/>
</dbReference>
<dbReference type="PANTHER" id="PTHR24095:SF14">
    <property type="entry name" value="ACETYL-COENZYME A SYNTHETASE 1"/>
    <property type="match status" value="1"/>
</dbReference>
<dbReference type="Pfam" id="PF16177">
    <property type="entry name" value="ACAS_N"/>
    <property type="match status" value="1"/>
</dbReference>
<dbReference type="Pfam" id="PF00501">
    <property type="entry name" value="AMP-binding"/>
    <property type="match status" value="1"/>
</dbReference>
<dbReference type="Pfam" id="PF13193">
    <property type="entry name" value="AMP-binding_C"/>
    <property type="match status" value="1"/>
</dbReference>
<dbReference type="SUPFAM" id="SSF56801">
    <property type="entry name" value="Acetyl-CoA synthetase-like"/>
    <property type="match status" value="1"/>
</dbReference>
<dbReference type="PROSITE" id="PS00455">
    <property type="entry name" value="AMP_BINDING"/>
    <property type="match status" value="1"/>
</dbReference>
<proteinExistence type="inferred from homology"/>
<evidence type="ECO:0000255" key="1">
    <source>
        <dbReference type="HAMAP-Rule" id="MF_01123"/>
    </source>
</evidence>
<accession>A9W5V0</accession>
<name>ACSA_METEP</name>
<keyword id="KW-0007">Acetylation</keyword>
<keyword id="KW-0067">ATP-binding</keyword>
<keyword id="KW-0436">Ligase</keyword>
<keyword id="KW-0460">Magnesium</keyword>
<keyword id="KW-0479">Metal-binding</keyword>
<keyword id="KW-0547">Nucleotide-binding</keyword>
<protein>
    <recommendedName>
        <fullName evidence="1">Acetyl-coenzyme A synthetase</fullName>
        <shortName evidence="1">AcCoA synthetase</shortName>
        <shortName evidence="1">Acs</shortName>
        <ecNumber evidence="1">6.2.1.1</ecNumber>
    </recommendedName>
    <alternativeName>
        <fullName evidence="1">Acetate--CoA ligase</fullName>
    </alternativeName>
    <alternativeName>
        <fullName evidence="1">Acyl-activating enzyme</fullName>
    </alternativeName>
</protein>
<gene>
    <name evidence="1" type="primary">acsA</name>
    <name type="ordered locus">Mext_2562</name>
</gene>
<sequence>MSEKVIDVQDAWRDRALIDEAKYKEMYEASVSGPETFWGEHGKRIDWSTPFSKVKNTSFAPGDVSIKWFEDGKTNVALNCIDRHLATRGDQTAIIWEGDDPNESKHITYRQLHAEVCRMANVLRNRGVGKGDRVTLYLPMIPEAAYAMLACARLGAIHAIVFGGFSPDSLASRIKGCGSKLVITADEGLRGGRKVPLKANVDEAIKRLDKDLVDHVIVVKRTGGNVAMEPGRDVYYHEAAEQVTDECPAEAVEAEHPLFILYTSGSTGQPKGVVHTTGGYLVYASMTHQYVFDYHDGDVYWCTADVGWVTGHSYIVYGPLANGATTLMFEGIPTYPSNSRFWEVIDKHNVNIFYTAPTAIRSLMGGGEGPVKKTSRQSLRVLGSVGEPINPEAWDWYYRVVGDSRCPIVDTWWQTETGGILITPLPGATRLKPGSATLPFFGVQPVMVDAEGKILDGACEGNLCIKDSWPGQMRTVYGDHERFEQTYFSTYKDLYFTGDGARRDADGYYWITGRVDDVINVSGHRMGTAEVESSLVAHPKVSEAAVVGYPHNVKGQGIYAYVTLNEGEEGTDELRKELVTWVRKDIGPIASPDLLQFAPGLPKTRSGKIMRRILRKIAEDDFGSLGDTSTLAEPAVVDDLIENRQNRSA</sequence>
<comment type="function">
    <text evidence="1">Catalyzes the conversion of acetate into acetyl-CoA (AcCoA), an essential intermediate at the junction of anabolic and catabolic pathways. AcsA undergoes a two-step reaction. In the first half reaction, AcsA combines acetate with ATP to form acetyl-adenylate (AcAMP) intermediate. In the second half reaction, it can then transfer the acetyl group from AcAMP to the sulfhydryl group of CoA, forming the product AcCoA.</text>
</comment>
<comment type="catalytic activity">
    <reaction evidence="1">
        <text>acetate + ATP + CoA = acetyl-CoA + AMP + diphosphate</text>
        <dbReference type="Rhea" id="RHEA:23176"/>
        <dbReference type="ChEBI" id="CHEBI:30089"/>
        <dbReference type="ChEBI" id="CHEBI:30616"/>
        <dbReference type="ChEBI" id="CHEBI:33019"/>
        <dbReference type="ChEBI" id="CHEBI:57287"/>
        <dbReference type="ChEBI" id="CHEBI:57288"/>
        <dbReference type="ChEBI" id="CHEBI:456215"/>
        <dbReference type="EC" id="6.2.1.1"/>
    </reaction>
</comment>
<comment type="cofactor">
    <cofactor evidence="1">
        <name>Mg(2+)</name>
        <dbReference type="ChEBI" id="CHEBI:18420"/>
    </cofactor>
</comment>
<comment type="PTM">
    <text evidence="1">Acetylated. Deacetylation by the SIR2-homolog deacetylase activates the enzyme.</text>
</comment>
<comment type="similarity">
    <text evidence="1">Belongs to the ATP-dependent AMP-binding enzyme family.</text>
</comment>
<organism>
    <name type="scientific">Methylorubrum extorquens (strain PA1)</name>
    <name type="common">Methylobacterium extorquens</name>
    <dbReference type="NCBI Taxonomy" id="419610"/>
    <lineage>
        <taxon>Bacteria</taxon>
        <taxon>Pseudomonadati</taxon>
        <taxon>Pseudomonadota</taxon>
        <taxon>Alphaproteobacteria</taxon>
        <taxon>Hyphomicrobiales</taxon>
        <taxon>Methylobacteriaceae</taxon>
        <taxon>Methylorubrum</taxon>
    </lineage>
</organism>
<feature type="chain" id="PRO_1000137267" description="Acetyl-coenzyme A synthetase">
    <location>
        <begin position="1"/>
        <end position="649"/>
    </location>
</feature>
<feature type="binding site" evidence="1">
    <location>
        <begin position="190"/>
        <end position="193"/>
    </location>
    <ligand>
        <name>CoA</name>
        <dbReference type="ChEBI" id="CHEBI:57287"/>
    </ligand>
</feature>
<feature type="binding site" evidence="1">
    <location>
        <position position="310"/>
    </location>
    <ligand>
        <name>CoA</name>
        <dbReference type="ChEBI" id="CHEBI:57287"/>
    </ligand>
</feature>
<feature type="binding site" evidence="1">
    <location>
        <begin position="386"/>
        <end position="388"/>
    </location>
    <ligand>
        <name>ATP</name>
        <dbReference type="ChEBI" id="CHEBI:30616"/>
    </ligand>
</feature>
<feature type="binding site" evidence="1">
    <location>
        <begin position="410"/>
        <end position="415"/>
    </location>
    <ligand>
        <name>ATP</name>
        <dbReference type="ChEBI" id="CHEBI:30616"/>
    </ligand>
</feature>
<feature type="binding site" evidence="1">
    <location>
        <position position="499"/>
    </location>
    <ligand>
        <name>ATP</name>
        <dbReference type="ChEBI" id="CHEBI:30616"/>
    </ligand>
</feature>
<feature type="binding site" evidence="1">
    <location>
        <position position="514"/>
    </location>
    <ligand>
        <name>ATP</name>
        <dbReference type="ChEBI" id="CHEBI:30616"/>
    </ligand>
</feature>
<feature type="binding site" evidence="1">
    <location>
        <position position="522"/>
    </location>
    <ligand>
        <name>CoA</name>
        <dbReference type="ChEBI" id="CHEBI:57287"/>
    </ligand>
</feature>
<feature type="binding site" evidence="1">
    <location>
        <position position="525"/>
    </location>
    <ligand>
        <name>ATP</name>
        <dbReference type="ChEBI" id="CHEBI:30616"/>
    </ligand>
</feature>
<feature type="binding site" evidence="1">
    <location>
        <position position="536"/>
    </location>
    <ligand>
        <name>Mg(2+)</name>
        <dbReference type="ChEBI" id="CHEBI:18420"/>
    </ligand>
</feature>
<feature type="binding site" evidence="1">
    <location>
        <position position="538"/>
    </location>
    <ligand>
        <name>Mg(2+)</name>
        <dbReference type="ChEBI" id="CHEBI:18420"/>
    </ligand>
</feature>
<feature type="binding site" evidence="1">
    <location>
        <position position="541"/>
    </location>
    <ligand>
        <name>Mg(2+)</name>
        <dbReference type="ChEBI" id="CHEBI:18420"/>
    </ligand>
</feature>
<feature type="binding site" evidence="1">
    <location>
        <position position="583"/>
    </location>
    <ligand>
        <name>CoA</name>
        <dbReference type="ChEBI" id="CHEBI:57287"/>
    </ligand>
</feature>
<feature type="modified residue" description="N6-acetyllysine" evidence="1">
    <location>
        <position position="608"/>
    </location>
</feature>